<reference key="1">
    <citation type="journal article" date="2007" name="PLoS Genet.">
        <title>Patterns and implications of gene gain and loss in the evolution of Prochlorococcus.</title>
        <authorList>
            <person name="Kettler G.C."/>
            <person name="Martiny A.C."/>
            <person name="Huang K."/>
            <person name="Zucker J."/>
            <person name="Coleman M.L."/>
            <person name="Rodrigue S."/>
            <person name="Chen F."/>
            <person name="Lapidus A."/>
            <person name="Ferriera S."/>
            <person name="Johnson J."/>
            <person name="Steglich C."/>
            <person name="Church G.M."/>
            <person name="Richardson P."/>
            <person name="Chisholm S.W."/>
        </authorList>
    </citation>
    <scope>NUCLEOTIDE SEQUENCE [LARGE SCALE GENOMIC DNA]</scope>
    <source>
        <strain>MIT 9515</strain>
    </source>
</reference>
<organism>
    <name type="scientific">Prochlorococcus marinus (strain MIT 9515)</name>
    <dbReference type="NCBI Taxonomy" id="167542"/>
    <lineage>
        <taxon>Bacteria</taxon>
        <taxon>Bacillati</taxon>
        <taxon>Cyanobacteriota</taxon>
        <taxon>Cyanophyceae</taxon>
        <taxon>Synechococcales</taxon>
        <taxon>Prochlorococcaceae</taxon>
        <taxon>Prochlorococcus</taxon>
    </lineage>
</organism>
<evidence type="ECO:0000255" key="1">
    <source>
        <dbReference type="HAMAP-Rule" id="MF_01350"/>
    </source>
</evidence>
<gene>
    <name evidence="1" type="primary">ndhA</name>
    <name type="ordered locus">P9515_01891</name>
</gene>
<accession>A2BUD7</accession>
<protein>
    <recommendedName>
        <fullName evidence="1">NAD(P)H-quinone oxidoreductase subunit 1</fullName>
        <ecNumber evidence="1">7.1.1.-</ecNumber>
    </recommendedName>
    <alternativeName>
        <fullName evidence="1">NAD(P)H dehydrogenase I subunit 1</fullName>
    </alternativeName>
    <alternativeName>
        <fullName evidence="1">NDH-1 subunit 1</fullName>
    </alternativeName>
    <alternativeName>
        <fullName evidence="1">NDH-A</fullName>
    </alternativeName>
</protein>
<name>NU1C_PROM5</name>
<sequence>MNTGLDLEYSFNEILKGFGLSSEIAHIIWLPLPMLIVLVSAVVGVLVTVWLERKISAAAQQRIGPEYAGALGVLQPIADGLKLLVKEDIIPAKADSILFTTGPILVLVPVILSWLIVPFGQNLLISNVGIGIFLWIALSSIQPIGLLMSGYASNNKYSLLGGLRAAAQSISYEIPLALSVLAVVLMTNSLSTIDIVNQQSGAGILSWNIWRQPVGFIIFWICALAECERLPFDLPEAEEELVAGYQTEYAGMKFALFYLGSYINLILSALLVSILYLGGWGFPIPVEIIAKVLNLPINAPVIQVFTASIGIIMTVLKAYLLVFIAILLRWTTPRVRIDQLLDLGWKFLLPISLANLLLTAGLKLALPQFFGG</sequence>
<proteinExistence type="inferred from homology"/>
<comment type="function">
    <text evidence="1">NDH-1 shuttles electrons from an unknown electron donor, via FMN and iron-sulfur (Fe-S) centers, to quinones in the respiratory and/or the photosynthetic chain. The immediate electron acceptor for the enzyme in this species is believed to be plastoquinone. Couples the redox reaction to proton translocation, and thus conserves the redox energy in a proton gradient.</text>
</comment>
<comment type="catalytic activity">
    <reaction evidence="1">
        <text>a plastoquinone + NADH + (n+1) H(+)(in) = a plastoquinol + NAD(+) + n H(+)(out)</text>
        <dbReference type="Rhea" id="RHEA:42608"/>
        <dbReference type="Rhea" id="RHEA-COMP:9561"/>
        <dbReference type="Rhea" id="RHEA-COMP:9562"/>
        <dbReference type="ChEBI" id="CHEBI:15378"/>
        <dbReference type="ChEBI" id="CHEBI:17757"/>
        <dbReference type="ChEBI" id="CHEBI:57540"/>
        <dbReference type="ChEBI" id="CHEBI:57945"/>
        <dbReference type="ChEBI" id="CHEBI:62192"/>
    </reaction>
</comment>
<comment type="catalytic activity">
    <reaction evidence="1">
        <text>a plastoquinone + NADPH + (n+1) H(+)(in) = a plastoquinol + NADP(+) + n H(+)(out)</text>
        <dbReference type="Rhea" id="RHEA:42612"/>
        <dbReference type="Rhea" id="RHEA-COMP:9561"/>
        <dbReference type="Rhea" id="RHEA-COMP:9562"/>
        <dbReference type="ChEBI" id="CHEBI:15378"/>
        <dbReference type="ChEBI" id="CHEBI:17757"/>
        <dbReference type="ChEBI" id="CHEBI:57783"/>
        <dbReference type="ChEBI" id="CHEBI:58349"/>
        <dbReference type="ChEBI" id="CHEBI:62192"/>
    </reaction>
</comment>
<comment type="subunit">
    <text evidence="1">NDH-1 is composed of at least 11 different subunits.</text>
</comment>
<comment type="subcellular location">
    <subcellularLocation>
        <location evidence="1">Cellular thylakoid membrane</location>
        <topology evidence="1">Multi-pass membrane protein</topology>
    </subcellularLocation>
</comment>
<comment type="similarity">
    <text evidence="1">Belongs to the complex I subunit 1 family.</text>
</comment>
<dbReference type="EC" id="7.1.1.-" evidence="1"/>
<dbReference type="EMBL" id="CP000552">
    <property type="protein sequence ID" value="ABM71398.1"/>
    <property type="molecule type" value="Genomic_DNA"/>
</dbReference>
<dbReference type="RefSeq" id="WP_011819512.1">
    <property type="nucleotide sequence ID" value="NC_008817.1"/>
</dbReference>
<dbReference type="SMR" id="A2BUD7"/>
<dbReference type="STRING" id="167542.P9515_01891"/>
<dbReference type="GeneID" id="60200518"/>
<dbReference type="KEGG" id="pmc:P9515_01891"/>
<dbReference type="eggNOG" id="COG1005">
    <property type="taxonomic scope" value="Bacteria"/>
</dbReference>
<dbReference type="HOGENOM" id="CLU_015134_0_1_3"/>
<dbReference type="OrthoDB" id="9803734at2"/>
<dbReference type="Proteomes" id="UP000001589">
    <property type="component" value="Chromosome"/>
</dbReference>
<dbReference type="GO" id="GO:0031676">
    <property type="term" value="C:plasma membrane-derived thylakoid membrane"/>
    <property type="evidence" value="ECO:0007669"/>
    <property type="project" value="UniProtKB-SubCell"/>
</dbReference>
<dbReference type="GO" id="GO:0003954">
    <property type="term" value="F:NADH dehydrogenase activity"/>
    <property type="evidence" value="ECO:0007669"/>
    <property type="project" value="TreeGrafter"/>
</dbReference>
<dbReference type="GO" id="GO:0016655">
    <property type="term" value="F:oxidoreductase activity, acting on NAD(P)H, quinone or similar compound as acceptor"/>
    <property type="evidence" value="ECO:0007669"/>
    <property type="project" value="UniProtKB-UniRule"/>
</dbReference>
<dbReference type="GO" id="GO:0048038">
    <property type="term" value="F:quinone binding"/>
    <property type="evidence" value="ECO:0007669"/>
    <property type="project" value="UniProtKB-KW"/>
</dbReference>
<dbReference type="GO" id="GO:0009060">
    <property type="term" value="P:aerobic respiration"/>
    <property type="evidence" value="ECO:0007669"/>
    <property type="project" value="TreeGrafter"/>
</dbReference>
<dbReference type="GO" id="GO:0019684">
    <property type="term" value="P:photosynthesis, light reaction"/>
    <property type="evidence" value="ECO:0007669"/>
    <property type="project" value="UniProtKB-UniRule"/>
</dbReference>
<dbReference type="HAMAP" id="MF_01350">
    <property type="entry name" value="NDH1_NuoH"/>
    <property type="match status" value="1"/>
</dbReference>
<dbReference type="InterPro" id="IPR001694">
    <property type="entry name" value="NADH_UbQ_OxRdtase_su1/FPO"/>
</dbReference>
<dbReference type="InterPro" id="IPR018086">
    <property type="entry name" value="NADH_UbQ_OxRdtase_su1_CS"/>
</dbReference>
<dbReference type="NCBIfam" id="NF004741">
    <property type="entry name" value="PRK06076.1-2"/>
    <property type="match status" value="1"/>
</dbReference>
<dbReference type="NCBIfam" id="NF004744">
    <property type="entry name" value="PRK06076.1-5"/>
    <property type="match status" value="1"/>
</dbReference>
<dbReference type="PANTHER" id="PTHR11432">
    <property type="entry name" value="NADH DEHYDROGENASE SUBUNIT 1"/>
    <property type="match status" value="1"/>
</dbReference>
<dbReference type="PANTHER" id="PTHR11432:SF3">
    <property type="entry name" value="NADH-UBIQUINONE OXIDOREDUCTASE CHAIN 1"/>
    <property type="match status" value="1"/>
</dbReference>
<dbReference type="Pfam" id="PF00146">
    <property type="entry name" value="NADHdh"/>
    <property type="match status" value="1"/>
</dbReference>
<dbReference type="PROSITE" id="PS00667">
    <property type="entry name" value="COMPLEX1_ND1_1"/>
    <property type="match status" value="1"/>
</dbReference>
<dbReference type="PROSITE" id="PS00668">
    <property type="entry name" value="COMPLEX1_ND1_2"/>
    <property type="match status" value="1"/>
</dbReference>
<feature type="chain" id="PRO_0000298841" description="NAD(P)H-quinone oxidoreductase subunit 1">
    <location>
        <begin position="1"/>
        <end position="372"/>
    </location>
</feature>
<feature type="transmembrane region" description="Helical" evidence="1">
    <location>
        <begin position="27"/>
        <end position="47"/>
    </location>
</feature>
<feature type="transmembrane region" description="Helical" evidence="1">
    <location>
        <begin position="97"/>
        <end position="117"/>
    </location>
</feature>
<feature type="transmembrane region" description="Helical" evidence="1">
    <location>
        <begin position="128"/>
        <end position="148"/>
    </location>
</feature>
<feature type="transmembrane region" description="Helical" evidence="1">
    <location>
        <begin position="176"/>
        <end position="196"/>
    </location>
</feature>
<feature type="transmembrane region" description="Helical" evidence="1">
    <location>
        <begin position="204"/>
        <end position="224"/>
    </location>
</feature>
<feature type="transmembrane region" description="Helical" evidence="1">
    <location>
        <begin position="266"/>
        <end position="286"/>
    </location>
</feature>
<feature type="transmembrane region" description="Helical" evidence="1">
    <location>
        <begin position="308"/>
        <end position="328"/>
    </location>
</feature>
<feature type="transmembrane region" description="Helical" evidence="1">
    <location>
        <begin position="347"/>
        <end position="367"/>
    </location>
</feature>
<keyword id="KW-0472">Membrane</keyword>
<keyword id="KW-0520">NAD</keyword>
<keyword id="KW-0521">NADP</keyword>
<keyword id="KW-0618">Plastoquinone</keyword>
<keyword id="KW-0874">Quinone</keyword>
<keyword id="KW-0793">Thylakoid</keyword>
<keyword id="KW-1278">Translocase</keyword>
<keyword id="KW-0812">Transmembrane</keyword>
<keyword id="KW-1133">Transmembrane helix</keyword>